<organism>
    <name type="scientific">Saccharomyces cerevisiae (strain ATCC 204508 / S288c)</name>
    <name type="common">Baker's yeast</name>
    <dbReference type="NCBI Taxonomy" id="559292"/>
    <lineage>
        <taxon>Eukaryota</taxon>
        <taxon>Fungi</taxon>
        <taxon>Dikarya</taxon>
        <taxon>Ascomycota</taxon>
        <taxon>Saccharomycotina</taxon>
        <taxon>Saccharomycetes</taxon>
        <taxon>Saccharomycetales</taxon>
        <taxon>Saccharomycetaceae</taxon>
        <taxon>Saccharomyces</taxon>
    </lineage>
</organism>
<gene>
    <name type="ordered locus">YCR081C-A</name>
</gene>
<dbReference type="EMBL" id="X59720">
    <property type="status" value="NOT_ANNOTATED_CDS"/>
    <property type="molecule type" value="Genomic_DNA"/>
</dbReference>
<dbReference type="EMBL" id="AF479938">
    <property type="protein sequence ID" value="AAL79251.1"/>
    <property type="molecule type" value="Genomic_DNA"/>
</dbReference>
<dbReference type="PaxDb" id="4932-YCR081C-A"/>
<dbReference type="EnsemblFungi" id="YCR081C-A_mRNA">
    <property type="protein sequence ID" value="YCR081C-A"/>
    <property type="gene ID" value="YCR081C-A"/>
</dbReference>
<dbReference type="AGR" id="SGD:S000028609"/>
<dbReference type="SGD" id="S000028609">
    <property type="gene designation" value="YCR081C-A"/>
</dbReference>
<dbReference type="HOGENOM" id="CLU_2623896_0_0_1"/>
<dbReference type="GO" id="GO:0016020">
    <property type="term" value="C:membrane"/>
    <property type="evidence" value="ECO:0007669"/>
    <property type="project" value="UniProtKB-SubCell"/>
</dbReference>
<protein>
    <recommendedName>
        <fullName>Putative uncharacterized protein YCR081C-A</fullName>
    </recommendedName>
</protein>
<keyword id="KW-0472">Membrane</keyword>
<keyword id="KW-0812">Transmembrane</keyword>
<keyword id="KW-1133">Transmembrane helix</keyword>
<name>YC081_YEAST</name>
<evidence type="ECO:0000255" key="1"/>
<evidence type="ECO:0000305" key="2"/>
<evidence type="ECO:0000305" key="3">
    <source>
    </source>
</evidence>
<proteinExistence type="uncertain"/>
<sequence>MWIFPLKPSIKKTQVYTGIVKRSRIITACSHVICVLGIIVGDEVVRLHGKCADIFMIFLVINEPFLFVFVRYFNYADS</sequence>
<reference key="1">
    <citation type="journal article" date="1992" name="Nature">
        <title>The complete DNA sequence of yeast chromosome III.</title>
        <authorList>
            <person name="Oliver S.G."/>
            <person name="van der Aart Q.J.M."/>
            <person name="Agostoni-Carbone M.L."/>
            <person name="Aigle M."/>
            <person name="Alberghina L."/>
            <person name="Alexandraki D."/>
            <person name="Antoine G."/>
            <person name="Anwar R."/>
            <person name="Ballesta J.P.G."/>
            <person name="Benit P."/>
            <person name="Berben G."/>
            <person name="Bergantino E."/>
            <person name="Biteau N."/>
            <person name="Bolle P.-A."/>
            <person name="Bolotin-Fukuhara M."/>
            <person name="Brown A."/>
            <person name="Brown A.J.P."/>
            <person name="Buhler J.-M."/>
            <person name="Carcano C."/>
            <person name="Carignani G."/>
            <person name="Cederberg H."/>
            <person name="Chanet R."/>
            <person name="Contreras R."/>
            <person name="Crouzet M."/>
            <person name="Daignan-Fornier B."/>
            <person name="Defoor E."/>
            <person name="Delgado M.D."/>
            <person name="Demolder J."/>
            <person name="Doira C."/>
            <person name="Dubois E."/>
            <person name="Dujon B."/>
            <person name="Duesterhoeft A."/>
            <person name="Erdmann D."/>
            <person name="Esteban M."/>
            <person name="Fabre F."/>
            <person name="Fairhead C."/>
            <person name="Faye G."/>
            <person name="Feldmann H."/>
            <person name="Fiers W."/>
            <person name="Francingues-Gaillard M.-C."/>
            <person name="Franco L."/>
            <person name="Frontali L."/>
            <person name="Fukuhara H."/>
            <person name="Fuller L.J."/>
            <person name="Galland P."/>
            <person name="Gent M.E."/>
            <person name="Gigot D."/>
            <person name="Gilliquet V."/>
            <person name="Glansdorff N."/>
            <person name="Goffeau A."/>
            <person name="Grenson M."/>
            <person name="Grisanti P."/>
            <person name="Grivell L.A."/>
            <person name="de Haan M."/>
            <person name="Haasemann M."/>
            <person name="Hatat D."/>
            <person name="Hoenicka J."/>
            <person name="Hegemann J.H."/>
            <person name="Herbert C.J."/>
            <person name="Hilger F."/>
            <person name="Hohmann S."/>
            <person name="Hollenberg C.P."/>
            <person name="Huse K."/>
            <person name="Iborra F."/>
            <person name="Indge K.J."/>
            <person name="Isono K."/>
            <person name="Jacq C."/>
            <person name="Jacquet M."/>
            <person name="James C.M."/>
            <person name="Jauniaux J.-C."/>
            <person name="Jia Y."/>
            <person name="Jimenez A."/>
            <person name="Kelly A."/>
            <person name="Kleinhans U."/>
            <person name="Kreisl P."/>
            <person name="Lanfranchi G."/>
            <person name="Lewis C."/>
            <person name="van der Linden C.G."/>
            <person name="Lucchini G."/>
            <person name="Lutzenkirchen K."/>
            <person name="Maat M.J."/>
            <person name="Mallet L."/>
            <person name="Mannhaupt G."/>
            <person name="Martegani E."/>
            <person name="Mathieu A."/>
            <person name="Maurer C.T.C."/>
            <person name="McConnell D."/>
            <person name="McKee R.A."/>
            <person name="Messenguy F."/>
            <person name="Mewes H.-W."/>
            <person name="Molemans F."/>
            <person name="Montague M.A."/>
            <person name="Muzi Falconi M."/>
            <person name="Navas L."/>
            <person name="Newlon C.S."/>
            <person name="Noone D."/>
            <person name="Pallier C."/>
            <person name="Panzeri L."/>
            <person name="Pearson B.M."/>
            <person name="Perea J."/>
            <person name="Philippsen P."/>
            <person name="Pierard A."/>
            <person name="Planta R.J."/>
            <person name="Plevani P."/>
            <person name="Poetsch B."/>
            <person name="Pohl F.M."/>
            <person name="Purnelle B."/>
            <person name="Ramezani Rad M."/>
            <person name="Rasmussen S.W."/>
            <person name="Raynal A."/>
            <person name="Remacha M.A."/>
            <person name="Richterich P."/>
            <person name="Roberts A.B."/>
            <person name="Rodriguez F."/>
            <person name="Sanz E."/>
            <person name="Schaaff-Gerstenschlaeger I."/>
            <person name="Scherens B."/>
            <person name="Schweitzer B."/>
            <person name="Shu Y."/>
            <person name="Skala J."/>
            <person name="Slonimski P.P."/>
            <person name="Sor F."/>
            <person name="Soustelle C."/>
            <person name="Spiegelberg R."/>
            <person name="Stateva L.I."/>
            <person name="Steensma H.Y."/>
            <person name="Steiner S."/>
            <person name="Thierry A."/>
            <person name="Thireos G."/>
            <person name="Tzermia M."/>
            <person name="Urrestarazu L.A."/>
            <person name="Valle G."/>
            <person name="Vetter I."/>
            <person name="van Vliet-Reedijk J.C."/>
            <person name="Voet M."/>
            <person name="Volckaert G."/>
            <person name="Vreken P."/>
            <person name="Wang H."/>
            <person name="Warmington J.R."/>
            <person name="von Wettstein D."/>
            <person name="Wicksteed B.L."/>
            <person name="Wilson C."/>
            <person name="Wurst H."/>
            <person name="Xu G."/>
            <person name="Yoshikawa A."/>
            <person name="Zimmermann F.K."/>
            <person name="Sgouros J.G."/>
        </authorList>
    </citation>
    <scope>NUCLEOTIDE SEQUENCE [LARGE SCALE GENOMIC DNA]</scope>
    <source>
        <strain>ATCC 204508 / S288c</strain>
    </source>
</reference>
<reference key="2">
    <citation type="journal article" date="2014" name="G3 (Bethesda)">
        <title>The reference genome sequence of Saccharomyces cerevisiae: Then and now.</title>
        <authorList>
            <person name="Engel S.R."/>
            <person name="Dietrich F.S."/>
            <person name="Fisk D.G."/>
            <person name="Binkley G."/>
            <person name="Balakrishnan R."/>
            <person name="Costanzo M.C."/>
            <person name="Dwight S.S."/>
            <person name="Hitz B.C."/>
            <person name="Karra K."/>
            <person name="Nash R.S."/>
            <person name="Weng S."/>
            <person name="Wong E.D."/>
            <person name="Lloyd P."/>
            <person name="Skrzypek M.S."/>
            <person name="Miyasato S.R."/>
            <person name="Simison M."/>
            <person name="Cherry J.M."/>
        </authorList>
    </citation>
    <scope>GENOME REANNOTATION</scope>
    <source>
        <strain>ATCC 204508 / S288c</strain>
    </source>
</reference>
<reference key="3">
    <citation type="journal article" date="2002" name="Nat. Biotechnol.">
        <title>An integrated approach for finding overlooked genes in yeast.</title>
        <authorList>
            <person name="Kumar A."/>
            <person name="Harrison P.M."/>
            <person name="Cheung K.-H."/>
            <person name="Lan N."/>
            <person name="Echols N."/>
            <person name="Bertone P."/>
            <person name="Miller P."/>
            <person name="Gerstein M.B."/>
            <person name="Snyder M."/>
        </authorList>
    </citation>
    <scope>NUCLEOTIDE SEQUENCE [GENOMIC DNA]</scope>
</reference>
<comment type="subcellular location">
    <subcellularLocation>
        <location evidence="2">Membrane</location>
        <topology evidence="2">Multi-pass membrane protein</topology>
    </subcellularLocation>
</comment>
<comment type="miscellaneous">
    <text evidence="2">Completely overlaps SRB8.</text>
</comment>
<comment type="caution">
    <text evidence="3">Product of a dubious gene prediction unlikely to encode a functional protein. Because of that it is not part of the S.cerevisiae S288c complete/reference proteome set.</text>
</comment>
<accession>Q8TGQ0</accession>
<feature type="chain" id="PRO_0000299839" description="Putative uncharacterized protein YCR081C-A">
    <location>
        <begin position="1"/>
        <end position="78"/>
    </location>
</feature>
<feature type="transmembrane region" description="Helical" evidence="1">
    <location>
        <begin position="25"/>
        <end position="45"/>
    </location>
</feature>
<feature type="transmembrane region" description="Helical" evidence="1">
    <location>
        <begin position="50"/>
        <end position="70"/>
    </location>
</feature>